<protein>
    <recommendedName>
        <fullName evidence="1">Putative ribose/galactose/methyl galactoside import ATP-binding protein 2</fullName>
        <ecNumber evidence="1">7.5.2.11</ecNumber>
        <ecNumber evidence="1">7.5.2.7</ecNumber>
    </recommendedName>
</protein>
<feature type="chain" id="PRO_0000262991" description="Putative ribose/galactose/methyl galactoside import ATP-binding protein 2">
    <location>
        <begin position="1"/>
        <end position="513"/>
    </location>
</feature>
<feature type="domain" description="ABC transporter 1" evidence="1">
    <location>
        <begin position="24"/>
        <end position="260"/>
    </location>
</feature>
<feature type="domain" description="ABC transporter 2" evidence="1">
    <location>
        <begin position="270"/>
        <end position="510"/>
    </location>
</feature>
<feature type="binding site" evidence="1">
    <location>
        <begin position="56"/>
        <end position="63"/>
    </location>
    <ligand>
        <name>ATP</name>
        <dbReference type="ChEBI" id="CHEBI:30616"/>
    </ligand>
</feature>
<reference key="1">
    <citation type="journal article" date="2001" name="Proc. Natl. Acad. Sci. U.S.A.">
        <title>The complete sequence of the 1,683-kb pSymB megaplasmid from the N2-fixing endosymbiont Sinorhizobium meliloti.</title>
        <authorList>
            <person name="Finan T.M."/>
            <person name="Weidner S."/>
            <person name="Wong K."/>
            <person name="Buhrmester J."/>
            <person name="Chain P."/>
            <person name="Vorhoelter F.J."/>
            <person name="Hernandez-Lucas I."/>
            <person name="Becker A."/>
            <person name="Cowie A."/>
            <person name="Gouzy J."/>
            <person name="Golding B."/>
            <person name="Puehler A."/>
        </authorList>
    </citation>
    <scope>NUCLEOTIDE SEQUENCE [LARGE SCALE GENOMIC DNA]</scope>
    <source>
        <strain>1021</strain>
    </source>
</reference>
<reference key="2">
    <citation type="journal article" date="2001" name="Science">
        <title>The composite genome of the legume symbiont Sinorhizobium meliloti.</title>
        <authorList>
            <person name="Galibert F."/>
            <person name="Finan T.M."/>
            <person name="Long S.R."/>
            <person name="Puehler A."/>
            <person name="Abola P."/>
            <person name="Ampe F."/>
            <person name="Barloy-Hubler F."/>
            <person name="Barnett M.J."/>
            <person name="Becker A."/>
            <person name="Boistard P."/>
            <person name="Bothe G."/>
            <person name="Boutry M."/>
            <person name="Bowser L."/>
            <person name="Buhrmester J."/>
            <person name="Cadieu E."/>
            <person name="Capela D."/>
            <person name="Chain P."/>
            <person name="Cowie A."/>
            <person name="Davis R.W."/>
            <person name="Dreano S."/>
            <person name="Federspiel N.A."/>
            <person name="Fisher R.F."/>
            <person name="Gloux S."/>
            <person name="Godrie T."/>
            <person name="Goffeau A."/>
            <person name="Golding B."/>
            <person name="Gouzy J."/>
            <person name="Gurjal M."/>
            <person name="Hernandez-Lucas I."/>
            <person name="Hong A."/>
            <person name="Huizar L."/>
            <person name="Hyman R.W."/>
            <person name="Jones T."/>
            <person name="Kahn D."/>
            <person name="Kahn M.L."/>
            <person name="Kalman S."/>
            <person name="Keating D.H."/>
            <person name="Kiss E."/>
            <person name="Komp C."/>
            <person name="Lelaure V."/>
            <person name="Masuy D."/>
            <person name="Palm C."/>
            <person name="Peck M.C."/>
            <person name="Pohl T.M."/>
            <person name="Portetelle D."/>
            <person name="Purnelle B."/>
            <person name="Ramsperger U."/>
            <person name="Surzycki R."/>
            <person name="Thebault P."/>
            <person name="Vandenbol M."/>
            <person name="Vorhoelter F.J."/>
            <person name="Weidner S."/>
            <person name="Wells D.H."/>
            <person name="Wong K."/>
            <person name="Yeh K.-C."/>
            <person name="Batut J."/>
        </authorList>
    </citation>
    <scope>NUCLEOTIDE SEQUENCE [LARGE SCALE GENOMIC DNA]</scope>
    <source>
        <strain>1021</strain>
    </source>
</reference>
<evidence type="ECO:0000255" key="1">
    <source>
        <dbReference type="HAMAP-Rule" id="MF_01717"/>
    </source>
</evidence>
<comment type="function">
    <text evidence="1">Part of an ABC transporter complex involved in carbohydrate import. Could be involved in ribose, galactose and/or methyl galactoside import. Responsible for energy coupling to the transport system.</text>
</comment>
<comment type="catalytic activity">
    <reaction evidence="1">
        <text>D-ribose(out) + ATP + H2O = D-ribose(in) + ADP + phosphate + H(+)</text>
        <dbReference type="Rhea" id="RHEA:29903"/>
        <dbReference type="ChEBI" id="CHEBI:15377"/>
        <dbReference type="ChEBI" id="CHEBI:15378"/>
        <dbReference type="ChEBI" id="CHEBI:30616"/>
        <dbReference type="ChEBI" id="CHEBI:43474"/>
        <dbReference type="ChEBI" id="CHEBI:47013"/>
        <dbReference type="ChEBI" id="CHEBI:456216"/>
        <dbReference type="EC" id="7.5.2.7"/>
    </reaction>
</comment>
<comment type="catalytic activity">
    <reaction evidence="1">
        <text>D-galactose(out) + ATP + H2O = D-galactose(in) + ADP + phosphate + H(+)</text>
        <dbReference type="Rhea" id="RHEA:60156"/>
        <dbReference type="ChEBI" id="CHEBI:4139"/>
        <dbReference type="ChEBI" id="CHEBI:15377"/>
        <dbReference type="ChEBI" id="CHEBI:15378"/>
        <dbReference type="ChEBI" id="CHEBI:30616"/>
        <dbReference type="ChEBI" id="CHEBI:43474"/>
        <dbReference type="ChEBI" id="CHEBI:456216"/>
        <dbReference type="EC" id="7.5.2.11"/>
    </reaction>
</comment>
<comment type="subcellular location">
    <subcellularLocation>
        <location evidence="1">Cell inner membrane</location>
        <topology evidence="1">Peripheral membrane protein</topology>
    </subcellularLocation>
</comment>
<comment type="similarity">
    <text evidence="1">Belongs to the ABC transporter superfamily. Carbohydrate importer 2 (CUT2) (TC 3.A.1.2) family.</text>
</comment>
<geneLocation type="plasmid">
    <name>pSymB</name>
    <name>megaplasmid 2</name>
</geneLocation>
<gene>
    <name type="ordered locus">RB1420</name>
    <name type="ORF">SMb20713</name>
</gene>
<keyword id="KW-0067">ATP-binding</keyword>
<keyword id="KW-0997">Cell inner membrane</keyword>
<keyword id="KW-1003">Cell membrane</keyword>
<keyword id="KW-0472">Membrane</keyword>
<keyword id="KW-0547">Nucleotide-binding</keyword>
<keyword id="KW-0614">Plasmid</keyword>
<keyword id="KW-1185">Reference proteome</keyword>
<keyword id="KW-0677">Repeat</keyword>
<keyword id="KW-0762">Sugar transport</keyword>
<keyword id="KW-1278">Translocase</keyword>
<keyword id="KW-0813">Transport</keyword>
<organism>
    <name type="scientific">Rhizobium meliloti (strain 1021)</name>
    <name type="common">Ensifer meliloti</name>
    <name type="synonym">Sinorhizobium meliloti</name>
    <dbReference type="NCBI Taxonomy" id="266834"/>
    <lineage>
        <taxon>Bacteria</taxon>
        <taxon>Pseudomonadati</taxon>
        <taxon>Pseudomonadota</taxon>
        <taxon>Alphaproteobacteria</taxon>
        <taxon>Hyphomicrobiales</taxon>
        <taxon>Rhizobiaceae</taxon>
        <taxon>Sinorhizobium/Ensifer group</taxon>
        <taxon>Sinorhizobium</taxon>
    </lineage>
</organism>
<proteinExistence type="inferred from homology"/>
<dbReference type="EC" id="7.5.2.11" evidence="1"/>
<dbReference type="EC" id="7.5.2.7" evidence="1"/>
<dbReference type="EMBL" id="AL591985">
    <property type="protein sequence ID" value="CAC49820.2"/>
    <property type="molecule type" value="Genomic_DNA"/>
</dbReference>
<dbReference type="PIR" id="D96019">
    <property type="entry name" value="D96019"/>
</dbReference>
<dbReference type="RefSeq" id="NP_437960.2">
    <property type="nucleotide sequence ID" value="NC_003078.1"/>
</dbReference>
<dbReference type="RefSeq" id="WP_003530544.1">
    <property type="nucleotide sequence ID" value="NC_003078.1"/>
</dbReference>
<dbReference type="SMR" id="Q92TS8"/>
<dbReference type="EnsemblBacteria" id="CAC49820">
    <property type="protein sequence ID" value="CAC49820"/>
    <property type="gene ID" value="SM_b20713"/>
</dbReference>
<dbReference type="KEGG" id="sme:SM_b20713"/>
<dbReference type="PATRIC" id="fig|266834.11.peg.6342"/>
<dbReference type="eggNOG" id="COG1129">
    <property type="taxonomic scope" value="Bacteria"/>
</dbReference>
<dbReference type="HOGENOM" id="CLU_000604_92_3_5"/>
<dbReference type="OrthoDB" id="9805029at2"/>
<dbReference type="PRO" id="PR:Q92TS8"/>
<dbReference type="Proteomes" id="UP000001976">
    <property type="component" value="Plasmid pSymB"/>
</dbReference>
<dbReference type="GO" id="GO:0005886">
    <property type="term" value="C:plasma membrane"/>
    <property type="evidence" value="ECO:0007669"/>
    <property type="project" value="UniProtKB-SubCell"/>
</dbReference>
<dbReference type="GO" id="GO:0015611">
    <property type="term" value="F:ABC-type D-ribose transporter activity"/>
    <property type="evidence" value="ECO:0007669"/>
    <property type="project" value="UniProtKB-EC"/>
</dbReference>
<dbReference type="GO" id="GO:0005524">
    <property type="term" value="F:ATP binding"/>
    <property type="evidence" value="ECO:0007669"/>
    <property type="project" value="UniProtKB-KW"/>
</dbReference>
<dbReference type="GO" id="GO:0016887">
    <property type="term" value="F:ATP hydrolysis activity"/>
    <property type="evidence" value="ECO:0007669"/>
    <property type="project" value="InterPro"/>
</dbReference>
<dbReference type="CDD" id="cd03216">
    <property type="entry name" value="ABC_Carb_Monos_I"/>
    <property type="match status" value="1"/>
</dbReference>
<dbReference type="CDD" id="cd03215">
    <property type="entry name" value="ABC_Carb_Monos_II"/>
    <property type="match status" value="1"/>
</dbReference>
<dbReference type="FunFam" id="3.40.50.300:FF:000126">
    <property type="entry name" value="Galactose/methyl galactoside import ATP-binding protein MglA"/>
    <property type="match status" value="1"/>
</dbReference>
<dbReference type="FunFam" id="3.40.50.300:FF:000127">
    <property type="entry name" value="Ribose import ATP-binding protein RbsA"/>
    <property type="match status" value="1"/>
</dbReference>
<dbReference type="Gene3D" id="3.40.50.300">
    <property type="entry name" value="P-loop containing nucleotide triphosphate hydrolases"/>
    <property type="match status" value="2"/>
</dbReference>
<dbReference type="InterPro" id="IPR003593">
    <property type="entry name" value="AAA+_ATPase"/>
</dbReference>
<dbReference type="InterPro" id="IPR050107">
    <property type="entry name" value="ABC_carbohydrate_import_ATPase"/>
</dbReference>
<dbReference type="InterPro" id="IPR003439">
    <property type="entry name" value="ABC_transporter-like_ATP-bd"/>
</dbReference>
<dbReference type="InterPro" id="IPR017871">
    <property type="entry name" value="ABC_transporter-like_CS"/>
</dbReference>
<dbReference type="InterPro" id="IPR027417">
    <property type="entry name" value="P-loop_NTPase"/>
</dbReference>
<dbReference type="PANTHER" id="PTHR43790">
    <property type="entry name" value="CARBOHYDRATE TRANSPORT ATP-BINDING PROTEIN MG119-RELATED"/>
    <property type="match status" value="1"/>
</dbReference>
<dbReference type="PANTHER" id="PTHR43790:SF7">
    <property type="entry name" value="GALACTOSE_METHYL GALACTOSIDE IMPORT ATP-BINDING PROTEIN MGLA"/>
    <property type="match status" value="1"/>
</dbReference>
<dbReference type="Pfam" id="PF00005">
    <property type="entry name" value="ABC_tran"/>
    <property type="match status" value="2"/>
</dbReference>
<dbReference type="SMART" id="SM00382">
    <property type="entry name" value="AAA"/>
    <property type="match status" value="2"/>
</dbReference>
<dbReference type="SUPFAM" id="SSF52540">
    <property type="entry name" value="P-loop containing nucleoside triphosphate hydrolases"/>
    <property type="match status" value="2"/>
</dbReference>
<dbReference type="PROSITE" id="PS00211">
    <property type="entry name" value="ABC_TRANSPORTER_1"/>
    <property type="match status" value="1"/>
</dbReference>
<dbReference type="PROSITE" id="PS50893">
    <property type="entry name" value="ABC_TRANSPORTER_2"/>
    <property type="match status" value="2"/>
</dbReference>
<dbReference type="PROSITE" id="PS51260">
    <property type="entry name" value="MGLA"/>
    <property type="match status" value="1"/>
</dbReference>
<dbReference type="PROSITE" id="PS51254">
    <property type="entry name" value="RBSA"/>
    <property type="match status" value="1"/>
</dbReference>
<sequence length="513" mass="57032">MTLSPTTMAAVRASGAVPKSEYLLTAEGVRKEFPGVVALDDVEFKLKRGTVHALMGENGAGKSTLMKILAGIYYPDQGEVKLRGAGIRLKSPLDALENGIAMIHQELNLMPFMTVAENIWIRREPKNRFGFVDHGEMRRMTAKLFERLKIDLDPEIEVRHLSVANRQMVEIAKAVSYESDVLIMDEPTSALTEREVAHLFEIIRDLRSQGIGIVYITHKMNELFEIADEFSVFRDGKYIGTHLSNEVTRDDIIRMMVGREITQMFPKEEVPIGDVVLSVKNLTLNGVFRDVSFDVRAGEILGVAGLVGSGRSNVAETLFGVTPASSGTIAIDGKEVVIDSANKAIRHRMAFLTEDRKDTGCLLILDILENMQIAVLQDKFVKRGFVSEREVTAACEEMSRKLRVKTPNLQERVENLSGGNQQKVLIGRWLLTNPRILILDEPTRGIDVGAKAEIHRLVTELARNGVAVIMISSEMPEVLGMSDRIMVMHEGRVTGILDRAEATQIKVMELAAR</sequence>
<accession>Q92TS8</accession>
<name>RGMG2_RHIME</name>